<feature type="chain" id="PRO_0000369390" description="Pleckstrin homology-like domain family A member 2">
    <location>
        <begin position="1"/>
        <end position="136"/>
    </location>
</feature>
<feature type="domain" description="PH" evidence="2">
    <location>
        <begin position="12"/>
        <end position="105"/>
    </location>
</feature>
<name>PHLA2_XENTR</name>
<dbReference type="EMBL" id="BC121703">
    <property type="protein sequence ID" value="AAI21704.1"/>
    <property type="molecule type" value="mRNA"/>
</dbReference>
<dbReference type="RefSeq" id="NP_001072825.1">
    <property type="nucleotide sequence ID" value="NM_001079357.1"/>
</dbReference>
<dbReference type="SMR" id="Q0V987"/>
<dbReference type="STRING" id="8364.ENSXETP00000011665"/>
<dbReference type="PaxDb" id="8364-ENSXETP00000055107"/>
<dbReference type="DNASU" id="780286"/>
<dbReference type="GeneID" id="780286"/>
<dbReference type="KEGG" id="xtr:780286"/>
<dbReference type="AGR" id="Xenbase:XB-GENE-994212"/>
<dbReference type="CTD" id="7262"/>
<dbReference type="Xenbase" id="XB-GENE-994212">
    <property type="gene designation" value="phlda2"/>
</dbReference>
<dbReference type="eggNOG" id="ENOG502RXZA">
    <property type="taxonomic scope" value="Eukaryota"/>
</dbReference>
<dbReference type="HOGENOM" id="CLU_062639_1_0_1"/>
<dbReference type="InParanoid" id="Q0V987"/>
<dbReference type="OMA" id="GFQNRRA"/>
<dbReference type="OrthoDB" id="9630709at2759"/>
<dbReference type="PhylomeDB" id="Q0V987"/>
<dbReference type="TreeFam" id="TF332320"/>
<dbReference type="Proteomes" id="UP000008143">
    <property type="component" value="Chromosome 7"/>
</dbReference>
<dbReference type="Bgee" id="ENSXETG00000026033">
    <property type="expression patterns" value="Expressed in gastrula and 12 other cell types or tissues"/>
</dbReference>
<dbReference type="GO" id="GO:0005737">
    <property type="term" value="C:cytoplasm"/>
    <property type="evidence" value="ECO:0007669"/>
    <property type="project" value="UniProtKB-SubCell"/>
</dbReference>
<dbReference type="GO" id="GO:0016020">
    <property type="term" value="C:membrane"/>
    <property type="evidence" value="ECO:0007669"/>
    <property type="project" value="UniProtKB-SubCell"/>
</dbReference>
<dbReference type="GO" id="GO:1901981">
    <property type="term" value="F:phosphatidylinositol phosphate binding"/>
    <property type="evidence" value="ECO:0007669"/>
    <property type="project" value="InterPro"/>
</dbReference>
<dbReference type="GO" id="GO:0043065">
    <property type="term" value="P:positive regulation of apoptotic process"/>
    <property type="evidence" value="ECO:0007669"/>
    <property type="project" value="InterPro"/>
</dbReference>
<dbReference type="CDD" id="cd00821">
    <property type="entry name" value="PH"/>
    <property type="match status" value="1"/>
</dbReference>
<dbReference type="Gene3D" id="2.30.29.30">
    <property type="entry name" value="Pleckstrin-homology domain (PH domain)/Phosphotyrosine-binding domain (PTB)"/>
    <property type="match status" value="1"/>
</dbReference>
<dbReference type="InterPro" id="IPR011993">
    <property type="entry name" value="PH-like_dom_sf"/>
</dbReference>
<dbReference type="InterPro" id="IPR001849">
    <property type="entry name" value="PH_domain"/>
</dbReference>
<dbReference type="InterPro" id="IPR042832">
    <property type="entry name" value="PHLA1/2/3"/>
</dbReference>
<dbReference type="PANTHER" id="PTHR15478:SF13">
    <property type="entry name" value="PLECKSTRIN HOMOLOGY-LIKE DOMAIN FAMILY A MEMBER 2"/>
    <property type="match status" value="1"/>
</dbReference>
<dbReference type="PANTHER" id="PTHR15478">
    <property type="entry name" value="PLECKSTRIN HOMOLOGY-LIKE DOMAIN, PQ-RICH PROTEIN"/>
    <property type="match status" value="1"/>
</dbReference>
<dbReference type="Pfam" id="PF00169">
    <property type="entry name" value="PH"/>
    <property type="match status" value="1"/>
</dbReference>
<dbReference type="SMART" id="SM00233">
    <property type="entry name" value="PH"/>
    <property type="match status" value="1"/>
</dbReference>
<dbReference type="SUPFAM" id="SSF50729">
    <property type="entry name" value="PH domain-like"/>
    <property type="match status" value="1"/>
</dbReference>
<dbReference type="PROSITE" id="PS50003">
    <property type="entry name" value="PH_DOMAIN"/>
    <property type="match status" value="1"/>
</dbReference>
<comment type="function">
    <text evidence="1">Plays a role in regulating placenta growth. May act via its PH domain that competes with other PH domain-containing proteins, thereby preventing their binding to membrane lipids (By similarity).</text>
</comment>
<comment type="subcellular location">
    <subcellularLocation>
        <location evidence="1">Cytoplasm</location>
    </subcellularLocation>
    <subcellularLocation>
        <location evidence="1">Membrane</location>
        <topology evidence="1">Peripheral membrane protein</topology>
    </subcellularLocation>
</comment>
<comment type="domain">
    <text evidence="1">The PH domain binds phosphoinositides with a broad specificity. It may compete with the PH domain of some other proteins, thereby interfering with their binding to phosphatidylinositol 4,5-bisphosphate (PIP2) and phosphatidylinositol 3,4,5-trisphosphate (PIP3) (By similarity).</text>
</comment>
<comment type="similarity">
    <text evidence="3">Belongs to the PHLDA2 family.</text>
</comment>
<accession>Q0V987</accession>
<keyword id="KW-0963">Cytoplasm</keyword>
<keyword id="KW-0472">Membrane</keyword>
<keyword id="KW-1185">Reference proteome</keyword>
<protein>
    <recommendedName>
        <fullName>Pleckstrin homology-like domain family A member 2</fullName>
    </recommendedName>
    <alternativeName>
        <fullName>Imprinted in placenta and liver protein</fullName>
    </alternativeName>
</protein>
<sequence length="136" mass="15786">MSVCGGAPPPAILKEGDLEKRSDSFLQLWKKRRCVLTADGLHLYSDARKRGKAKVLRFDSLAKLECVEWKGERVYFTLVTLGGQEIDFRCRERSRWNAEITLALVGFQNRRAVRELRERKEHQARDNGERLRSWGP</sequence>
<proteinExistence type="evidence at transcript level"/>
<reference key="1">
    <citation type="submission" date="2006-08" db="EMBL/GenBank/DDBJ databases">
        <authorList>
            <consortium name="NIH - Xenopus Gene Collection (XGC) project"/>
        </authorList>
    </citation>
    <scope>NUCLEOTIDE SEQUENCE [LARGE SCALE MRNA]</scope>
    <source>
        <strain>N6</strain>
        <tissue>Oviduct</tissue>
    </source>
</reference>
<organism>
    <name type="scientific">Xenopus tropicalis</name>
    <name type="common">Western clawed frog</name>
    <name type="synonym">Silurana tropicalis</name>
    <dbReference type="NCBI Taxonomy" id="8364"/>
    <lineage>
        <taxon>Eukaryota</taxon>
        <taxon>Metazoa</taxon>
        <taxon>Chordata</taxon>
        <taxon>Craniata</taxon>
        <taxon>Vertebrata</taxon>
        <taxon>Euteleostomi</taxon>
        <taxon>Amphibia</taxon>
        <taxon>Batrachia</taxon>
        <taxon>Anura</taxon>
        <taxon>Pipoidea</taxon>
        <taxon>Pipidae</taxon>
        <taxon>Xenopodinae</taxon>
        <taxon>Xenopus</taxon>
        <taxon>Silurana</taxon>
    </lineage>
</organism>
<gene>
    <name type="primary">phlda2</name>
    <name type="synonym">ipl</name>
</gene>
<evidence type="ECO:0000250" key="1"/>
<evidence type="ECO:0000255" key="2">
    <source>
        <dbReference type="PROSITE-ProRule" id="PRU00145"/>
    </source>
</evidence>
<evidence type="ECO:0000305" key="3"/>